<protein>
    <recommendedName>
        <fullName>Probable cell wall protein PGA41</fullName>
    </recommendedName>
    <alternativeName>
        <fullName>Predicted GPI-anchored protein 41</fullName>
    </alternativeName>
</protein>
<organism>
    <name type="scientific">Candida albicans (strain SC5314 / ATCC MYA-2876)</name>
    <name type="common">Yeast</name>
    <dbReference type="NCBI Taxonomy" id="237561"/>
    <lineage>
        <taxon>Eukaryota</taxon>
        <taxon>Fungi</taxon>
        <taxon>Dikarya</taxon>
        <taxon>Ascomycota</taxon>
        <taxon>Saccharomycotina</taxon>
        <taxon>Pichiomycetes</taxon>
        <taxon>Debaryomycetaceae</taxon>
        <taxon>Candida/Lodderomyces clade</taxon>
        <taxon>Candida</taxon>
    </lineage>
</organism>
<accession>Q5A1B3</accession>
<accession>A0A1D8PMK7</accession>
<accession>Q5A1H1</accession>
<evidence type="ECO:0000250" key="1"/>
<evidence type="ECO:0000255" key="2"/>
<evidence type="ECO:0000256" key="3">
    <source>
        <dbReference type="SAM" id="MobiDB-lite"/>
    </source>
</evidence>
<evidence type="ECO:0000269" key="4">
    <source>
    </source>
</evidence>
<evidence type="ECO:0000305" key="5"/>
<dbReference type="EMBL" id="CP017626">
    <property type="protein sequence ID" value="AOW29357.1"/>
    <property type="molecule type" value="Genomic_DNA"/>
</dbReference>
<dbReference type="RefSeq" id="XP_715561.2">
    <property type="nucleotide sequence ID" value="XM_710468.2"/>
</dbReference>
<dbReference type="STRING" id="237561.Q5A1B3"/>
<dbReference type="GlyCosmos" id="Q5A1B3">
    <property type="glycosylation" value="2 sites, No reported glycans"/>
</dbReference>
<dbReference type="EnsemblFungi" id="C4_06310C_A-T">
    <property type="protein sequence ID" value="C4_06310C_A-T-p1"/>
    <property type="gene ID" value="C4_06310C_A"/>
</dbReference>
<dbReference type="GeneID" id="3642800"/>
<dbReference type="KEGG" id="cal:CAALFM_C406310CA"/>
<dbReference type="CGD" id="CAL0000197357">
    <property type="gene designation" value="PGA41"/>
</dbReference>
<dbReference type="VEuPathDB" id="FungiDB:C4_06310C_A"/>
<dbReference type="HOGENOM" id="CLU_940073_0_0_1"/>
<dbReference type="InParanoid" id="Q5A1B3"/>
<dbReference type="OrthoDB" id="4025955at2759"/>
<dbReference type="PRO" id="PR:Q5A1B3"/>
<dbReference type="Proteomes" id="UP000000559">
    <property type="component" value="Chromosome 4"/>
</dbReference>
<dbReference type="GO" id="GO:0005576">
    <property type="term" value="C:extracellular region"/>
    <property type="evidence" value="ECO:0007669"/>
    <property type="project" value="UniProtKB-KW"/>
</dbReference>
<dbReference type="GO" id="GO:0098552">
    <property type="term" value="C:side of membrane"/>
    <property type="evidence" value="ECO:0007669"/>
    <property type="project" value="UniProtKB-KW"/>
</dbReference>
<feature type="signal peptide" evidence="2">
    <location>
        <begin position="1"/>
        <end position="18"/>
    </location>
</feature>
<feature type="chain" id="PRO_0000424739" description="Probable cell wall protein PGA41">
    <location>
        <begin position="19"/>
        <end position="275"/>
    </location>
</feature>
<feature type="propeptide" id="PRO_0000424740" description="Removed in mature form" evidence="2">
    <location>
        <begin position="276"/>
        <end position="296"/>
    </location>
</feature>
<feature type="region of interest" description="Disordered" evidence="3">
    <location>
        <begin position="146"/>
        <end position="276"/>
    </location>
</feature>
<feature type="compositionally biased region" description="Low complexity" evidence="3">
    <location>
        <begin position="146"/>
        <end position="212"/>
    </location>
</feature>
<feature type="compositionally biased region" description="Gly residues" evidence="3">
    <location>
        <begin position="220"/>
        <end position="245"/>
    </location>
</feature>
<feature type="compositionally biased region" description="Low complexity" evidence="3">
    <location>
        <begin position="247"/>
        <end position="274"/>
    </location>
</feature>
<feature type="lipid moiety-binding region" description="GPI-anchor amidated glycine" evidence="2">
    <location>
        <position position="275"/>
    </location>
</feature>
<feature type="glycosylation site" description="N-linked (GlcNAc...) asparagine" evidence="2">
    <location>
        <position position="229"/>
    </location>
</feature>
<feature type="glycosylation site" description="N-linked (GlcNAc...) asparagine" evidence="2">
    <location>
        <position position="268"/>
    </location>
</feature>
<gene>
    <name type="primary">PGA41</name>
    <name type="ordered locus">CAALFM_C406310CA</name>
    <name type="ORF">CaO19.10424</name>
    <name type="ORF">CaO19.2906</name>
</gene>
<comment type="function">
    <text evidence="1">Probable GPI-anchored cell wall protein that may be involved in cell wall organization, hyphal growth, as well as in virulence.</text>
</comment>
<comment type="subcellular location">
    <subcellularLocation>
        <location evidence="1">Secreted</location>
        <location evidence="1">Cell wall</location>
    </subcellularLocation>
    <subcellularLocation>
        <location evidence="5">Membrane</location>
        <topology evidence="5">Lipid-anchor</topology>
        <topology evidence="5">GPI-anchor</topology>
    </subcellularLocation>
</comment>
<comment type="induction">
    <text evidence="4">Up-regulated upon milbemycin A3 oxim derivative (A3Ox) treatment.</text>
</comment>
<comment type="PTM">
    <text evidence="1">The GPI-anchor is attached to the protein in the endoplasmic reticulum and serves to target the protein to the cell surface. There, the glucosamine-inositol phospholipid moiety is cleaved off and the GPI-modified mannoprotein is covalently attached via its lipidless GPI glycan remnant to the 1,6-beta-glucan of the outer cell wall layer (By similarity).</text>
</comment>
<comment type="similarity">
    <text evidence="5">Belongs to the IHD1 family.</text>
</comment>
<sequence>MKFTIVLFTLISVTVAAAATTTTTAAANRIQNKAYAYYYCNSYCTQAVNDENSCGYYDTDVSNQEYYACLCTKSSYYNNLRSCDCFTKVVYYYSTSICSRANVGTYVGGRTSTTWGVSATKYRSSTSTSSLTRKSSSIGASPSIAIASSTKESSSTESSSSLEQSSSAGQSSSTEQSPSTEVSSSSSIEESSSNQDISSTDSITTISSDSSTGNTDSPTQGGGGNSGNNGSNGDGGNDASGGGGVVNENEQASSPPSSQSSTNSNQPNSSQTAPGAANYLSSVSVGTLMILVLGLI</sequence>
<name>PGA41_CANAL</name>
<keyword id="KW-0134">Cell wall</keyword>
<keyword id="KW-0325">Glycoprotein</keyword>
<keyword id="KW-0336">GPI-anchor</keyword>
<keyword id="KW-0449">Lipoprotein</keyword>
<keyword id="KW-0472">Membrane</keyword>
<keyword id="KW-1185">Reference proteome</keyword>
<keyword id="KW-0964">Secreted</keyword>
<keyword id="KW-0732">Signal</keyword>
<keyword id="KW-0843">Virulence</keyword>
<proteinExistence type="evidence at protein level"/>
<reference key="1">
    <citation type="journal article" date="2004" name="Proc. Natl. Acad. Sci. U.S.A.">
        <title>The diploid genome sequence of Candida albicans.</title>
        <authorList>
            <person name="Jones T."/>
            <person name="Federspiel N.A."/>
            <person name="Chibana H."/>
            <person name="Dungan J."/>
            <person name="Kalman S."/>
            <person name="Magee B.B."/>
            <person name="Newport G."/>
            <person name="Thorstenson Y.R."/>
            <person name="Agabian N."/>
            <person name="Magee P.T."/>
            <person name="Davis R.W."/>
            <person name="Scherer S."/>
        </authorList>
    </citation>
    <scope>NUCLEOTIDE SEQUENCE [LARGE SCALE GENOMIC DNA]</scope>
    <source>
        <strain>SC5314 / ATCC MYA-2876</strain>
    </source>
</reference>
<reference key="2">
    <citation type="journal article" date="2007" name="Genome Biol.">
        <title>Assembly of the Candida albicans genome into sixteen supercontigs aligned on the eight chromosomes.</title>
        <authorList>
            <person name="van het Hoog M."/>
            <person name="Rast T.J."/>
            <person name="Martchenko M."/>
            <person name="Grindle S."/>
            <person name="Dignard D."/>
            <person name="Hogues H."/>
            <person name="Cuomo C."/>
            <person name="Berriman M."/>
            <person name="Scherer S."/>
            <person name="Magee B.B."/>
            <person name="Whiteway M."/>
            <person name="Chibana H."/>
            <person name="Nantel A."/>
            <person name="Magee P.T."/>
        </authorList>
    </citation>
    <scope>GENOME REANNOTATION</scope>
    <source>
        <strain>SC5314 / ATCC MYA-2876</strain>
    </source>
</reference>
<reference key="3">
    <citation type="journal article" date="2013" name="Genome Biol.">
        <title>Assembly of a phased diploid Candida albicans genome facilitates allele-specific measurements and provides a simple model for repeat and indel structure.</title>
        <authorList>
            <person name="Muzzey D."/>
            <person name="Schwartz K."/>
            <person name="Weissman J.S."/>
            <person name="Sherlock G."/>
        </authorList>
    </citation>
    <scope>NUCLEOTIDE SEQUENCE [LARGE SCALE GENOMIC DNA]</scope>
    <scope>GENOME REANNOTATION</scope>
    <source>
        <strain>SC5314 / ATCC MYA-2876</strain>
    </source>
</reference>
<reference key="4">
    <citation type="journal article" date="2003" name="Yeast">
        <title>Genome-wide identification of fungal GPI proteins.</title>
        <authorList>
            <person name="De Groot P.W."/>
            <person name="Hellingwerf K.J."/>
            <person name="Klis F.M."/>
        </authorList>
    </citation>
    <scope>PREDICTION OF GPI-ANCHOR</scope>
</reference>
<reference key="5">
    <citation type="journal article" date="2013" name="Antimicrob. Agents Chemother.">
        <title>Milbemycins: more than efflux inhibitors for fungal pathogens.</title>
        <authorList>
            <person name="Silva L.V."/>
            <person name="Sanguinetti M."/>
            <person name="Vandeputte P."/>
            <person name="Torelli R."/>
            <person name="Rochat B."/>
            <person name="Sanglard D."/>
        </authorList>
    </citation>
    <scope>INDUCTION</scope>
</reference>